<feature type="chain" id="PRO_1000199666" description="Ubiquinone biosynthesis O-methyltransferase">
    <location>
        <begin position="1"/>
        <end position="237"/>
    </location>
</feature>
<feature type="binding site" evidence="1">
    <location>
        <position position="38"/>
    </location>
    <ligand>
        <name>S-adenosyl-L-methionine</name>
        <dbReference type="ChEBI" id="CHEBI:59789"/>
    </ligand>
</feature>
<feature type="binding site" evidence="1">
    <location>
        <position position="58"/>
    </location>
    <ligand>
        <name>S-adenosyl-L-methionine</name>
        <dbReference type="ChEBI" id="CHEBI:59789"/>
    </ligand>
</feature>
<feature type="binding site" evidence="1">
    <location>
        <position position="79"/>
    </location>
    <ligand>
        <name>S-adenosyl-L-methionine</name>
        <dbReference type="ChEBI" id="CHEBI:59789"/>
    </ligand>
</feature>
<feature type="binding site" evidence="1">
    <location>
        <position position="124"/>
    </location>
    <ligand>
        <name>S-adenosyl-L-methionine</name>
        <dbReference type="ChEBI" id="CHEBI:59789"/>
    </ligand>
</feature>
<name>UBIG_ACIBS</name>
<reference key="1">
    <citation type="journal article" date="2008" name="PLoS ONE">
        <title>Comparative analysis of Acinetobacters: three genomes for three lifestyles.</title>
        <authorList>
            <person name="Vallenet D."/>
            <person name="Nordmann P."/>
            <person name="Barbe V."/>
            <person name="Poirel L."/>
            <person name="Mangenot S."/>
            <person name="Bataille E."/>
            <person name="Dossat C."/>
            <person name="Gas S."/>
            <person name="Kreimeyer A."/>
            <person name="Lenoble P."/>
            <person name="Oztas S."/>
            <person name="Poulain J."/>
            <person name="Segurens B."/>
            <person name="Robert C."/>
            <person name="Abergel C."/>
            <person name="Claverie J.-M."/>
            <person name="Raoult D."/>
            <person name="Medigue C."/>
            <person name="Weissenbach J."/>
            <person name="Cruveiller S."/>
        </authorList>
    </citation>
    <scope>NUCLEOTIDE SEQUENCE [LARGE SCALE GENOMIC DNA]</scope>
    <source>
        <strain>SDF</strain>
    </source>
</reference>
<organism>
    <name type="scientific">Acinetobacter baumannii (strain SDF)</name>
    <dbReference type="NCBI Taxonomy" id="509170"/>
    <lineage>
        <taxon>Bacteria</taxon>
        <taxon>Pseudomonadati</taxon>
        <taxon>Pseudomonadota</taxon>
        <taxon>Gammaproteobacteria</taxon>
        <taxon>Moraxellales</taxon>
        <taxon>Moraxellaceae</taxon>
        <taxon>Acinetobacter</taxon>
        <taxon>Acinetobacter calcoaceticus/baumannii complex</taxon>
    </lineage>
</organism>
<gene>
    <name evidence="1" type="primary">ubiG</name>
    <name type="ordered locus">ABSDF0045</name>
</gene>
<keyword id="KW-0489">Methyltransferase</keyword>
<keyword id="KW-0949">S-adenosyl-L-methionine</keyword>
<keyword id="KW-0808">Transferase</keyword>
<keyword id="KW-0831">Ubiquinone biosynthesis</keyword>
<proteinExistence type="inferred from homology"/>
<protein>
    <recommendedName>
        <fullName evidence="1">Ubiquinone biosynthesis O-methyltransferase</fullName>
    </recommendedName>
    <alternativeName>
        <fullName evidence="1">2-polyprenyl-6-hydroxyphenol methylase</fullName>
        <ecNumber evidence="1">2.1.1.222</ecNumber>
    </alternativeName>
    <alternativeName>
        <fullName evidence="1">3-demethylubiquinone 3-O-methyltransferase</fullName>
        <ecNumber evidence="1">2.1.1.64</ecNumber>
    </alternativeName>
</protein>
<comment type="function">
    <text evidence="1">O-methyltransferase that catalyzes the 2 O-methylation steps in the ubiquinone biosynthetic pathway.</text>
</comment>
<comment type="catalytic activity">
    <reaction evidence="1">
        <text>a 3-demethylubiquinol + S-adenosyl-L-methionine = a ubiquinol + S-adenosyl-L-homocysteine + H(+)</text>
        <dbReference type="Rhea" id="RHEA:44380"/>
        <dbReference type="Rhea" id="RHEA-COMP:9566"/>
        <dbReference type="Rhea" id="RHEA-COMP:10914"/>
        <dbReference type="ChEBI" id="CHEBI:15378"/>
        <dbReference type="ChEBI" id="CHEBI:17976"/>
        <dbReference type="ChEBI" id="CHEBI:57856"/>
        <dbReference type="ChEBI" id="CHEBI:59789"/>
        <dbReference type="ChEBI" id="CHEBI:84422"/>
        <dbReference type="EC" id="2.1.1.64"/>
    </reaction>
</comment>
<comment type="catalytic activity">
    <reaction evidence="1">
        <text>a 3-(all-trans-polyprenyl)benzene-1,2-diol + S-adenosyl-L-methionine = a 2-methoxy-6-(all-trans-polyprenyl)phenol + S-adenosyl-L-homocysteine + H(+)</text>
        <dbReference type="Rhea" id="RHEA:31411"/>
        <dbReference type="Rhea" id="RHEA-COMP:9550"/>
        <dbReference type="Rhea" id="RHEA-COMP:9551"/>
        <dbReference type="ChEBI" id="CHEBI:15378"/>
        <dbReference type="ChEBI" id="CHEBI:57856"/>
        <dbReference type="ChEBI" id="CHEBI:59789"/>
        <dbReference type="ChEBI" id="CHEBI:62729"/>
        <dbReference type="ChEBI" id="CHEBI:62731"/>
        <dbReference type="EC" id="2.1.1.222"/>
    </reaction>
</comment>
<comment type="pathway">
    <text evidence="1">Cofactor biosynthesis; ubiquinone biosynthesis.</text>
</comment>
<comment type="similarity">
    <text evidence="1">Belongs to the methyltransferase superfamily. UbiG/COQ3 family.</text>
</comment>
<accession>B0VMN8</accession>
<dbReference type="EC" id="2.1.1.222" evidence="1"/>
<dbReference type="EC" id="2.1.1.64" evidence="1"/>
<dbReference type="EMBL" id="CU468230">
    <property type="protein sequence ID" value="CAO99460.1"/>
    <property type="molecule type" value="Genomic_DNA"/>
</dbReference>
<dbReference type="SMR" id="B0VMN8"/>
<dbReference type="KEGG" id="abm:ABSDF0045"/>
<dbReference type="HOGENOM" id="CLU_042432_5_0_6"/>
<dbReference type="UniPathway" id="UPA00232"/>
<dbReference type="Proteomes" id="UP000001741">
    <property type="component" value="Chromosome"/>
</dbReference>
<dbReference type="GO" id="GO:0102208">
    <property type="term" value="F:2-polyprenyl-6-hydroxyphenol methylase activity"/>
    <property type="evidence" value="ECO:0007669"/>
    <property type="project" value="UniProtKB-EC"/>
</dbReference>
<dbReference type="GO" id="GO:0061542">
    <property type="term" value="F:3-demethylubiquinol 3-O-methyltransferase activity"/>
    <property type="evidence" value="ECO:0007669"/>
    <property type="project" value="UniProtKB-UniRule"/>
</dbReference>
<dbReference type="GO" id="GO:0010420">
    <property type="term" value="F:polyprenyldihydroxybenzoate methyltransferase activity"/>
    <property type="evidence" value="ECO:0007669"/>
    <property type="project" value="InterPro"/>
</dbReference>
<dbReference type="GO" id="GO:0032259">
    <property type="term" value="P:methylation"/>
    <property type="evidence" value="ECO:0007669"/>
    <property type="project" value="UniProtKB-KW"/>
</dbReference>
<dbReference type="CDD" id="cd02440">
    <property type="entry name" value="AdoMet_MTases"/>
    <property type="match status" value="1"/>
</dbReference>
<dbReference type="FunFam" id="3.40.50.150:FF:000028">
    <property type="entry name" value="Ubiquinone biosynthesis O-methyltransferase"/>
    <property type="match status" value="1"/>
</dbReference>
<dbReference type="Gene3D" id="3.40.50.150">
    <property type="entry name" value="Vaccinia Virus protein VP39"/>
    <property type="match status" value="1"/>
</dbReference>
<dbReference type="HAMAP" id="MF_00472">
    <property type="entry name" value="UbiG"/>
    <property type="match status" value="1"/>
</dbReference>
<dbReference type="InterPro" id="IPR029063">
    <property type="entry name" value="SAM-dependent_MTases_sf"/>
</dbReference>
<dbReference type="InterPro" id="IPR010233">
    <property type="entry name" value="UbiG_MeTrfase"/>
</dbReference>
<dbReference type="NCBIfam" id="TIGR01983">
    <property type="entry name" value="UbiG"/>
    <property type="match status" value="1"/>
</dbReference>
<dbReference type="PANTHER" id="PTHR43464">
    <property type="entry name" value="METHYLTRANSFERASE"/>
    <property type="match status" value="1"/>
</dbReference>
<dbReference type="PANTHER" id="PTHR43464:SF19">
    <property type="entry name" value="UBIQUINONE BIOSYNTHESIS O-METHYLTRANSFERASE, MITOCHONDRIAL"/>
    <property type="match status" value="1"/>
</dbReference>
<dbReference type="Pfam" id="PF13489">
    <property type="entry name" value="Methyltransf_23"/>
    <property type="match status" value="1"/>
</dbReference>
<dbReference type="SUPFAM" id="SSF53335">
    <property type="entry name" value="S-adenosyl-L-methionine-dependent methyltransferases"/>
    <property type="match status" value="1"/>
</dbReference>
<sequence>MSQLNVDLQEIAKFEALAAKWWDQHSEFRPLHQINPLRLNWIDERAGGLAGKKVLDVGCGGGILAESMARRGADVLGIDMGEAPLAVGRLHAQQENVQNIEYRQIPVEELAQEQAGQYDVVTCMEMMEHVPDPASIVKACQTLVKPGGHVFFSTINRNPKSYLFAIIGAEYVLRMLPKGTHDYHKFIRPSEMAHDIRNAGLTLKEMTGLHYNPITKRYWLAPNVDVNYMVHTIKTGV</sequence>
<evidence type="ECO:0000255" key="1">
    <source>
        <dbReference type="HAMAP-Rule" id="MF_00472"/>
    </source>
</evidence>